<organism>
    <name type="scientific">Bos taurus</name>
    <name type="common">Bovine</name>
    <dbReference type="NCBI Taxonomy" id="9913"/>
    <lineage>
        <taxon>Eukaryota</taxon>
        <taxon>Metazoa</taxon>
        <taxon>Chordata</taxon>
        <taxon>Craniata</taxon>
        <taxon>Vertebrata</taxon>
        <taxon>Euteleostomi</taxon>
        <taxon>Mammalia</taxon>
        <taxon>Eutheria</taxon>
        <taxon>Laurasiatheria</taxon>
        <taxon>Artiodactyla</taxon>
        <taxon>Ruminantia</taxon>
        <taxon>Pecora</taxon>
        <taxon>Bovidae</taxon>
        <taxon>Bovinae</taxon>
        <taxon>Bos</taxon>
    </lineage>
</organism>
<feature type="chain" id="PRO_0000245031" description="Glutathione S-transferase theta-1">
    <location>
        <begin position="1"/>
        <end position="240"/>
    </location>
</feature>
<feature type="domain" description="GST N-terminal">
    <location>
        <begin position="2"/>
        <end position="82"/>
    </location>
</feature>
<feature type="domain" description="GST C-terminal">
    <location>
        <begin position="88"/>
        <end position="226"/>
    </location>
</feature>
<feature type="binding site" evidence="1">
    <location>
        <position position="40"/>
    </location>
    <ligand>
        <name>glutathione</name>
        <dbReference type="ChEBI" id="CHEBI:57925"/>
    </ligand>
</feature>
<feature type="binding site" evidence="1">
    <location>
        <begin position="53"/>
        <end position="54"/>
    </location>
    <ligand>
        <name>glutathione</name>
        <dbReference type="ChEBI" id="CHEBI:57925"/>
    </ligand>
</feature>
<feature type="binding site" evidence="1">
    <location>
        <begin position="66"/>
        <end position="67"/>
    </location>
    <ligand>
        <name>glutathione</name>
        <dbReference type="ChEBI" id="CHEBI:57925"/>
    </ligand>
</feature>
<dbReference type="EC" id="2.5.1.18"/>
<dbReference type="EMBL" id="BC111289">
    <property type="protein sequence ID" value="AAI11290.1"/>
    <property type="molecule type" value="mRNA"/>
</dbReference>
<dbReference type="RefSeq" id="NP_001039697.1">
    <property type="nucleotide sequence ID" value="NM_001046232.2"/>
</dbReference>
<dbReference type="SMR" id="Q2NL00"/>
<dbReference type="FunCoup" id="Q2NL00">
    <property type="interactions" value="1067"/>
</dbReference>
<dbReference type="STRING" id="9913.ENSBTAP00000007403"/>
<dbReference type="PaxDb" id="9913-ENSBTAP00000007403"/>
<dbReference type="Ensembl" id="ENSBTAT00000007403.4">
    <property type="protein sequence ID" value="ENSBTAP00000007403.3"/>
    <property type="gene ID" value="ENSBTAG00000040298.3"/>
</dbReference>
<dbReference type="GeneID" id="517724"/>
<dbReference type="KEGG" id="bta:517724"/>
<dbReference type="CTD" id="2952"/>
<dbReference type="VEuPathDB" id="HostDB:ENSBTAG00000040298"/>
<dbReference type="eggNOG" id="KOG0867">
    <property type="taxonomic scope" value="Eukaryota"/>
</dbReference>
<dbReference type="GeneTree" id="ENSGT00940000156366"/>
<dbReference type="HOGENOM" id="CLU_011226_2_0_1"/>
<dbReference type="InParanoid" id="Q2NL00"/>
<dbReference type="OMA" id="CQYRVDE"/>
<dbReference type="OrthoDB" id="422574at2759"/>
<dbReference type="TreeFam" id="TF325759"/>
<dbReference type="Reactome" id="R-BTA-156590">
    <property type="pathway name" value="Glutathione conjugation"/>
</dbReference>
<dbReference type="Reactome" id="R-BTA-9753281">
    <property type="pathway name" value="Paracetamol ADME"/>
</dbReference>
<dbReference type="Proteomes" id="UP000009136">
    <property type="component" value="Chromosome 17"/>
</dbReference>
<dbReference type="Bgee" id="ENSBTAG00000040298">
    <property type="expression patterns" value="Expressed in cortex of kidney and 102 other cell types or tissues"/>
</dbReference>
<dbReference type="GO" id="GO:0005737">
    <property type="term" value="C:cytoplasm"/>
    <property type="evidence" value="ECO:0000318"/>
    <property type="project" value="GO_Central"/>
</dbReference>
<dbReference type="GO" id="GO:0005829">
    <property type="term" value="C:cytosol"/>
    <property type="evidence" value="ECO:0007669"/>
    <property type="project" value="Ensembl"/>
</dbReference>
<dbReference type="GO" id="GO:0004364">
    <property type="term" value="F:glutathione transferase activity"/>
    <property type="evidence" value="ECO:0000318"/>
    <property type="project" value="GO_Central"/>
</dbReference>
<dbReference type="GO" id="GO:0006749">
    <property type="term" value="P:glutathione metabolic process"/>
    <property type="evidence" value="ECO:0000318"/>
    <property type="project" value="GO_Central"/>
</dbReference>
<dbReference type="CDD" id="cd03183">
    <property type="entry name" value="GST_C_Theta"/>
    <property type="match status" value="1"/>
</dbReference>
<dbReference type="CDD" id="cd03050">
    <property type="entry name" value="GST_N_Theta"/>
    <property type="match status" value="1"/>
</dbReference>
<dbReference type="FunFam" id="1.20.1050.10:FF:000008">
    <property type="entry name" value="Glutathione S-transferase theta-1"/>
    <property type="match status" value="1"/>
</dbReference>
<dbReference type="FunFam" id="3.40.30.10:FF:000086">
    <property type="entry name" value="Glutathione S-transferase theta-1"/>
    <property type="match status" value="1"/>
</dbReference>
<dbReference type="Gene3D" id="1.20.1050.10">
    <property type="match status" value="1"/>
</dbReference>
<dbReference type="Gene3D" id="3.40.30.10">
    <property type="entry name" value="Glutaredoxin"/>
    <property type="match status" value="1"/>
</dbReference>
<dbReference type="InterPro" id="IPR010987">
    <property type="entry name" value="Glutathione-S-Trfase_C-like"/>
</dbReference>
<dbReference type="InterPro" id="IPR036282">
    <property type="entry name" value="Glutathione-S-Trfase_C_sf"/>
</dbReference>
<dbReference type="InterPro" id="IPR004045">
    <property type="entry name" value="Glutathione_S-Trfase_N"/>
</dbReference>
<dbReference type="InterPro" id="IPR004046">
    <property type="entry name" value="GST_C"/>
</dbReference>
<dbReference type="InterPro" id="IPR040077">
    <property type="entry name" value="GST_C_Theta"/>
</dbReference>
<dbReference type="InterPro" id="IPR040075">
    <property type="entry name" value="GST_N_Theta"/>
</dbReference>
<dbReference type="InterPro" id="IPR051369">
    <property type="entry name" value="GST_Theta"/>
</dbReference>
<dbReference type="InterPro" id="IPR036249">
    <property type="entry name" value="Thioredoxin-like_sf"/>
</dbReference>
<dbReference type="PANTHER" id="PTHR43917">
    <property type="match status" value="1"/>
</dbReference>
<dbReference type="PANTHER" id="PTHR43917:SF9">
    <property type="entry name" value="GLUTATHIONE S-TRANSFERASE THETA-1"/>
    <property type="match status" value="1"/>
</dbReference>
<dbReference type="Pfam" id="PF00043">
    <property type="entry name" value="GST_C"/>
    <property type="match status" value="1"/>
</dbReference>
<dbReference type="Pfam" id="PF02798">
    <property type="entry name" value="GST_N"/>
    <property type="match status" value="1"/>
</dbReference>
<dbReference type="SFLD" id="SFLDG01153">
    <property type="entry name" value="Main.4:_Theta-like"/>
    <property type="match status" value="1"/>
</dbReference>
<dbReference type="SFLD" id="SFLDG00358">
    <property type="entry name" value="Main_(cytGST)"/>
    <property type="match status" value="1"/>
</dbReference>
<dbReference type="SUPFAM" id="SSF47616">
    <property type="entry name" value="GST C-terminal domain-like"/>
    <property type="match status" value="1"/>
</dbReference>
<dbReference type="SUPFAM" id="SSF52833">
    <property type="entry name" value="Thioredoxin-like"/>
    <property type="match status" value="1"/>
</dbReference>
<dbReference type="PROSITE" id="PS50405">
    <property type="entry name" value="GST_CTER"/>
    <property type="match status" value="1"/>
</dbReference>
<dbReference type="PROSITE" id="PS50404">
    <property type="entry name" value="GST_NTER"/>
    <property type="match status" value="1"/>
</dbReference>
<gene>
    <name type="primary">GSTT1</name>
</gene>
<reference key="1">
    <citation type="submission" date="2005-12" db="EMBL/GenBank/DDBJ databases">
        <authorList>
            <consortium name="NIH - Mammalian Gene Collection (MGC) project"/>
        </authorList>
    </citation>
    <scope>NUCLEOTIDE SEQUENCE [LARGE SCALE MRNA]</scope>
    <source>
        <strain>Crossbred X Angus</strain>
        <tissue>Liver</tissue>
    </source>
</reference>
<keyword id="KW-0963">Cytoplasm</keyword>
<keyword id="KW-1185">Reference proteome</keyword>
<keyword id="KW-0808">Transferase</keyword>
<name>GSTT1_BOVIN</name>
<protein>
    <recommendedName>
        <fullName>Glutathione S-transferase theta-1</fullName>
        <ecNumber>2.5.1.18</ecNumber>
    </recommendedName>
    <alternativeName>
        <fullName>GST class-theta-1</fullName>
    </alternativeName>
</protein>
<proteinExistence type="evidence at transcript level"/>
<accession>Q2NL00</accession>
<sequence>MGLELYLDLLSQPCRAIYIFAKKNRIPFELRTVDLRKGQHLSDAFAQVNPLQKVPILKDGDFILTESVAILLYLARKYKVPDHWYPQDLQACARVDEYLAWQHTALRRNCLRALWHKVMLPVFLGEPVSPEMLATTLAELDMALQVLEGKFLQDKAFLTGSHISLADLVAITELMHPVGAGCQVFKGRPKLAAWRQRVEAAVGEVLFQEAHEVILKAKDSQPADPTLKQKMLPKVLAMIQ</sequence>
<comment type="function">
    <text>Conjugation of reduced glutathione to a wide number of exogenous and endogenous hydrophobic electrophiles. Also binds steroids, bilirubin, carcinogens and numerous organic anions. Has dichloromethane dehalogenase activity.</text>
</comment>
<comment type="catalytic activity">
    <reaction>
        <text>RX + glutathione = an S-substituted glutathione + a halide anion + H(+)</text>
        <dbReference type="Rhea" id="RHEA:16437"/>
        <dbReference type="ChEBI" id="CHEBI:15378"/>
        <dbReference type="ChEBI" id="CHEBI:16042"/>
        <dbReference type="ChEBI" id="CHEBI:17792"/>
        <dbReference type="ChEBI" id="CHEBI:57925"/>
        <dbReference type="ChEBI" id="CHEBI:90779"/>
        <dbReference type="EC" id="2.5.1.18"/>
    </reaction>
</comment>
<comment type="subunit">
    <text evidence="1">Homodimer.</text>
</comment>
<comment type="subcellular location">
    <subcellularLocation>
        <location evidence="1">Cytoplasm</location>
    </subcellularLocation>
</comment>
<comment type="similarity">
    <text evidence="2">Belongs to the GST superfamily. Theta family.</text>
</comment>
<evidence type="ECO:0000250" key="1"/>
<evidence type="ECO:0000305" key="2"/>